<reference key="1">
    <citation type="journal article" date="2004" name="Science">
        <title>The genomic sequence of the accidental pathogen Legionella pneumophila.</title>
        <authorList>
            <person name="Chien M."/>
            <person name="Morozova I."/>
            <person name="Shi S."/>
            <person name="Sheng H."/>
            <person name="Chen J."/>
            <person name="Gomez S.M."/>
            <person name="Asamani G."/>
            <person name="Hill K."/>
            <person name="Nuara J."/>
            <person name="Feder M."/>
            <person name="Rineer J."/>
            <person name="Greenberg J.J."/>
            <person name="Steshenko V."/>
            <person name="Park S.H."/>
            <person name="Zhao B."/>
            <person name="Teplitskaya E."/>
            <person name="Edwards J.R."/>
            <person name="Pampou S."/>
            <person name="Georghiou A."/>
            <person name="Chou I.-C."/>
            <person name="Iannuccilli W."/>
            <person name="Ulz M.E."/>
            <person name="Kim D.H."/>
            <person name="Geringer-Sameth A."/>
            <person name="Goldsberry C."/>
            <person name="Morozov P."/>
            <person name="Fischer S.G."/>
            <person name="Segal G."/>
            <person name="Qu X."/>
            <person name="Rzhetsky A."/>
            <person name="Zhang P."/>
            <person name="Cayanis E."/>
            <person name="De Jong P.J."/>
            <person name="Ju J."/>
            <person name="Kalachikov S."/>
            <person name="Shuman H.A."/>
            <person name="Russo J.J."/>
        </authorList>
    </citation>
    <scope>NUCLEOTIDE SEQUENCE [LARGE SCALE GENOMIC DNA]</scope>
    <source>
        <strain>Philadelphia 1 / ATCC 33152 / DSM 7513</strain>
    </source>
</reference>
<evidence type="ECO:0000255" key="1">
    <source>
        <dbReference type="HAMAP-Rule" id="MF_00016"/>
    </source>
</evidence>
<evidence type="ECO:0000305" key="2"/>
<keyword id="KW-0067">ATP-binding</keyword>
<keyword id="KW-0963">Cytoplasm</keyword>
<keyword id="KW-0227">DNA damage</keyword>
<keyword id="KW-0233">DNA recombination</keyword>
<keyword id="KW-0234">DNA repair</keyword>
<keyword id="KW-0238">DNA-binding</keyword>
<keyword id="KW-0378">Hydrolase</keyword>
<keyword id="KW-0547">Nucleotide-binding</keyword>
<keyword id="KW-1185">Reference proteome</keyword>
<gene>
    <name evidence="1" type="primary">ruvB</name>
    <name type="ordered locus">lpg1576</name>
</gene>
<feature type="chain" id="PRO_0000165546" description="Holliday junction branch migration complex subunit RuvB">
    <location>
        <begin position="1"/>
        <end position="336"/>
    </location>
</feature>
<feature type="region of interest" description="Large ATPase domain (RuvB-L)" evidence="1">
    <location>
        <begin position="4"/>
        <end position="184"/>
    </location>
</feature>
<feature type="region of interest" description="Small ATPAse domain (RuvB-S)" evidence="1">
    <location>
        <begin position="185"/>
        <end position="255"/>
    </location>
</feature>
<feature type="region of interest" description="Head domain (RuvB-H)" evidence="1">
    <location>
        <begin position="258"/>
        <end position="336"/>
    </location>
</feature>
<feature type="binding site" evidence="1">
    <location>
        <position position="23"/>
    </location>
    <ligand>
        <name>ATP</name>
        <dbReference type="ChEBI" id="CHEBI:30616"/>
    </ligand>
</feature>
<feature type="binding site" evidence="1">
    <location>
        <position position="24"/>
    </location>
    <ligand>
        <name>ATP</name>
        <dbReference type="ChEBI" id="CHEBI:30616"/>
    </ligand>
</feature>
<feature type="binding site" evidence="1">
    <location>
        <position position="65"/>
    </location>
    <ligand>
        <name>ATP</name>
        <dbReference type="ChEBI" id="CHEBI:30616"/>
    </ligand>
</feature>
<feature type="binding site" evidence="1">
    <location>
        <position position="68"/>
    </location>
    <ligand>
        <name>ATP</name>
        <dbReference type="ChEBI" id="CHEBI:30616"/>
    </ligand>
</feature>
<feature type="binding site" evidence="1">
    <location>
        <position position="69"/>
    </location>
    <ligand>
        <name>ATP</name>
        <dbReference type="ChEBI" id="CHEBI:30616"/>
    </ligand>
</feature>
<feature type="binding site" evidence="1">
    <location>
        <position position="69"/>
    </location>
    <ligand>
        <name>Mg(2+)</name>
        <dbReference type="ChEBI" id="CHEBI:18420"/>
    </ligand>
</feature>
<feature type="binding site" evidence="1">
    <location>
        <position position="70"/>
    </location>
    <ligand>
        <name>ATP</name>
        <dbReference type="ChEBI" id="CHEBI:30616"/>
    </ligand>
</feature>
<feature type="binding site" evidence="1">
    <location>
        <begin position="131"/>
        <end position="133"/>
    </location>
    <ligand>
        <name>ATP</name>
        <dbReference type="ChEBI" id="CHEBI:30616"/>
    </ligand>
</feature>
<feature type="binding site" evidence="1">
    <location>
        <position position="174"/>
    </location>
    <ligand>
        <name>ATP</name>
        <dbReference type="ChEBI" id="CHEBI:30616"/>
    </ligand>
</feature>
<feature type="binding site" evidence="1">
    <location>
        <position position="184"/>
    </location>
    <ligand>
        <name>ATP</name>
        <dbReference type="ChEBI" id="CHEBI:30616"/>
    </ligand>
</feature>
<feature type="binding site" evidence="1">
    <location>
        <position position="221"/>
    </location>
    <ligand>
        <name>ATP</name>
        <dbReference type="ChEBI" id="CHEBI:30616"/>
    </ligand>
</feature>
<feature type="binding site" evidence="1">
    <location>
        <position position="313"/>
    </location>
    <ligand>
        <name>DNA</name>
        <dbReference type="ChEBI" id="CHEBI:16991"/>
    </ligand>
</feature>
<feature type="binding site" evidence="1">
    <location>
        <position position="318"/>
    </location>
    <ligand>
        <name>DNA</name>
        <dbReference type="ChEBI" id="CHEBI:16991"/>
    </ligand>
</feature>
<dbReference type="EC" id="3.6.4.-" evidence="1"/>
<dbReference type="EMBL" id="AE017354">
    <property type="protein sequence ID" value="AAU27658.1"/>
    <property type="status" value="ALT_INIT"/>
    <property type="molecule type" value="Genomic_DNA"/>
</dbReference>
<dbReference type="RefSeq" id="WP_025862355.1">
    <property type="nucleotide sequence ID" value="NC_002942.5"/>
</dbReference>
<dbReference type="RefSeq" id="YP_095605.1">
    <property type="nucleotide sequence ID" value="NC_002942.5"/>
</dbReference>
<dbReference type="SMR" id="Q5ZV64"/>
<dbReference type="STRING" id="272624.lpg1576"/>
<dbReference type="PaxDb" id="272624-lpg1576"/>
<dbReference type="GeneID" id="57035566"/>
<dbReference type="KEGG" id="lpn:lpg1576"/>
<dbReference type="PATRIC" id="fig|272624.6.peg.1651"/>
<dbReference type="eggNOG" id="COG2255">
    <property type="taxonomic scope" value="Bacteria"/>
</dbReference>
<dbReference type="HOGENOM" id="CLU_055599_1_0_6"/>
<dbReference type="OrthoDB" id="9804478at2"/>
<dbReference type="Proteomes" id="UP000000609">
    <property type="component" value="Chromosome"/>
</dbReference>
<dbReference type="GO" id="GO:0005737">
    <property type="term" value="C:cytoplasm"/>
    <property type="evidence" value="ECO:0007669"/>
    <property type="project" value="UniProtKB-SubCell"/>
</dbReference>
<dbReference type="GO" id="GO:0048476">
    <property type="term" value="C:Holliday junction resolvase complex"/>
    <property type="evidence" value="ECO:0007669"/>
    <property type="project" value="UniProtKB-UniRule"/>
</dbReference>
<dbReference type="GO" id="GO:0005524">
    <property type="term" value="F:ATP binding"/>
    <property type="evidence" value="ECO:0007669"/>
    <property type="project" value="UniProtKB-UniRule"/>
</dbReference>
<dbReference type="GO" id="GO:0016887">
    <property type="term" value="F:ATP hydrolysis activity"/>
    <property type="evidence" value="ECO:0007669"/>
    <property type="project" value="InterPro"/>
</dbReference>
<dbReference type="GO" id="GO:0000400">
    <property type="term" value="F:four-way junction DNA binding"/>
    <property type="evidence" value="ECO:0007669"/>
    <property type="project" value="UniProtKB-UniRule"/>
</dbReference>
<dbReference type="GO" id="GO:0009378">
    <property type="term" value="F:four-way junction helicase activity"/>
    <property type="evidence" value="ECO:0007669"/>
    <property type="project" value="InterPro"/>
</dbReference>
<dbReference type="GO" id="GO:0006310">
    <property type="term" value="P:DNA recombination"/>
    <property type="evidence" value="ECO:0007669"/>
    <property type="project" value="UniProtKB-UniRule"/>
</dbReference>
<dbReference type="GO" id="GO:0006281">
    <property type="term" value="P:DNA repair"/>
    <property type="evidence" value="ECO:0007669"/>
    <property type="project" value="UniProtKB-UniRule"/>
</dbReference>
<dbReference type="CDD" id="cd00009">
    <property type="entry name" value="AAA"/>
    <property type="match status" value="1"/>
</dbReference>
<dbReference type="FunFam" id="1.10.10.10:FF:000086">
    <property type="entry name" value="Holliday junction ATP-dependent DNA helicase RuvB"/>
    <property type="match status" value="1"/>
</dbReference>
<dbReference type="FunFam" id="3.40.50.300:FF:000073">
    <property type="entry name" value="Holliday junction ATP-dependent DNA helicase RuvB"/>
    <property type="match status" value="1"/>
</dbReference>
<dbReference type="Gene3D" id="1.10.8.60">
    <property type="match status" value="1"/>
</dbReference>
<dbReference type="Gene3D" id="3.40.50.300">
    <property type="entry name" value="P-loop containing nucleotide triphosphate hydrolases"/>
    <property type="match status" value="1"/>
</dbReference>
<dbReference type="Gene3D" id="1.10.10.10">
    <property type="entry name" value="Winged helix-like DNA-binding domain superfamily/Winged helix DNA-binding domain"/>
    <property type="match status" value="1"/>
</dbReference>
<dbReference type="HAMAP" id="MF_00016">
    <property type="entry name" value="DNA_HJ_migration_RuvB"/>
    <property type="match status" value="1"/>
</dbReference>
<dbReference type="InterPro" id="IPR003593">
    <property type="entry name" value="AAA+_ATPase"/>
</dbReference>
<dbReference type="InterPro" id="IPR041445">
    <property type="entry name" value="AAA_lid_4"/>
</dbReference>
<dbReference type="InterPro" id="IPR004605">
    <property type="entry name" value="DNA_helicase_Holl-junc_RuvB"/>
</dbReference>
<dbReference type="InterPro" id="IPR027417">
    <property type="entry name" value="P-loop_NTPase"/>
</dbReference>
<dbReference type="InterPro" id="IPR008824">
    <property type="entry name" value="RuvB-like_N"/>
</dbReference>
<dbReference type="InterPro" id="IPR008823">
    <property type="entry name" value="RuvB_C"/>
</dbReference>
<dbReference type="InterPro" id="IPR036388">
    <property type="entry name" value="WH-like_DNA-bd_sf"/>
</dbReference>
<dbReference type="InterPro" id="IPR036390">
    <property type="entry name" value="WH_DNA-bd_sf"/>
</dbReference>
<dbReference type="NCBIfam" id="NF000868">
    <property type="entry name" value="PRK00080.1"/>
    <property type="match status" value="1"/>
</dbReference>
<dbReference type="NCBIfam" id="TIGR00635">
    <property type="entry name" value="ruvB"/>
    <property type="match status" value="1"/>
</dbReference>
<dbReference type="PANTHER" id="PTHR42848">
    <property type="match status" value="1"/>
</dbReference>
<dbReference type="PANTHER" id="PTHR42848:SF1">
    <property type="entry name" value="HOLLIDAY JUNCTION BRANCH MIGRATION COMPLEX SUBUNIT RUVB"/>
    <property type="match status" value="1"/>
</dbReference>
<dbReference type="Pfam" id="PF17864">
    <property type="entry name" value="AAA_lid_4"/>
    <property type="match status" value="1"/>
</dbReference>
<dbReference type="Pfam" id="PF05491">
    <property type="entry name" value="RuvB_C"/>
    <property type="match status" value="1"/>
</dbReference>
<dbReference type="Pfam" id="PF05496">
    <property type="entry name" value="RuvB_N"/>
    <property type="match status" value="1"/>
</dbReference>
<dbReference type="SMART" id="SM00382">
    <property type="entry name" value="AAA"/>
    <property type="match status" value="1"/>
</dbReference>
<dbReference type="SUPFAM" id="SSF52540">
    <property type="entry name" value="P-loop containing nucleoside triphosphate hydrolases"/>
    <property type="match status" value="1"/>
</dbReference>
<dbReference type="SUPFAM" id="SSF46785">
    <property type="entry name" value="Winged helix' DNA-binding domain"/>
    <property type="match status" value="1"/>
</dbReference>
<organism>
    <name type="scientific">Legionella pneumophila subsp. pneumophila (strain Philadelphia 1 / ATCC 33152 / DSM 7513)</name>
    <dbReference type="NCBI Taxonomy" id="272624"/>
    <lineage>
        <taxon>Bacteria</taxon>
        <taxon>Pseudomonadati</taxon>
        <taxon>Pseudomonadota</taxon>
        <taxon>Gammaproteobacteria</taxon>
        <taxon>Legionellales</taxon>
        <taxon>Legionellaceae</taxon>
        <taxon>Legionella</taxon>
    </lineage>
</organism>
<sequence length="336" mass="37105">MLESDRLISSQSIVSEDAMDRAIRPLSLSEYVGQDSVSSQMQIFINAARKRNDPLDHVLIFGPPGLGKTTLANIIAHEMGVNIRQTSGPVIERAGDIAAILTNLQQNDVLFIDEIHRLSPVIEEILYPAMEDYKLDIMIGEGPAARSIKLELPPFTLIGATTRAGLLTSPLRDRFGIVQRLEYYSVDSLTQIVARSAHLLGVPTKPEGAREIALRSRGTPRIANRLLRRVRDYSEVKGNGIITVDMAQQALEMLEVDQHGFDLMDRKLLLAVIEHFNGGPVGIDSIAAAIGEEKGTIEDVLEPFLIQQGFLMRTPRGRIATSKAYQHFGFSAIEQE</sequence>
<accession>Q5ZV64</accession>
<protein>
    <recommendedName>
        <fullName evidence="1">Holliday junction branch migration complex subunit RuvB</fullName>
        <ecNumber evidence="1">3.6.4.-</ecNumber>
    </recommendedName>
</protein>
<name>RUVB_LEGPH</name>
<proteinExistence type="inferred from homology"/>
<comment type="function">
    <text evidence="1">The RuvA-RuvB-RuvC complex processes Holliday junction (HJ) DNA during genetic recombination and DNA repair, while the RuvA-RuvB complex plays an important role in the rescue of blocked DNA replication forks via replication fork reversal (RFR). RuvA specifically binds to HJ cruciform DNA, conferring on it an open structure. The RuvB hexamer acts as an ATP-dependent pump, pulling dsDNA into and through the RuvAB complex. RuvB forms 2 homohexamers on either side of HJ DNA bound by 1 or 2 RuvA tetramers; 4 subunits per hexamer contact DNA at a time. Coordinated motions by a converter formed by DNA-disengaged RuvB subunits stimulates ATP hydrolysis and nucleotide exchange. Immobilization of the converter enables RuvB to convert the ATP-contained energy into a lever motion, pulling 2 nucleotides of DNA out of the RuvA tetramer per ATP hydrolyzed, thus driving DNA branch migration. The RuvB motors rotate together with the DNA substrate, which together with the progressing nucleotide cycle form the mechanistic basis for DNA recombination by continuous HJ branch migration. Branch migration allows RuvC to scan DNA until it finds its consensus sequence, where it cleaves and resolves cruciform DNA.</text>
</comment>
<comment type="catalytic activity">
    <reaction evidence="1">
        <text>ATP + H2O = ADP + phosphate + H(+)</text>
        <dbReference type="Rhea" id="RHEA:13065"/>
        <dbReference type="ChEBI" id="CHEBI:15377"/>
        <dbReference type="ChEBI" id="CHEBI:15378"/>
        <dbReference type="ChEBI" id="CHEBI:30616"/>
        <dbReference type="ChEBI" id="CHEBI:43474"/>
        <dbReference type="ChEBI" id="CHEBI:456216"/>
    </reaction>
</comment>
<comment type="subunit">
    <text evidence="1">Homohexamer. Forms an RuvA(8)-RuvB(12)-Holliday junction (HJ) complex. HJ DNA is sandwiched between 2 RuvA tetramers; dsDNA enters through RuvA and exits via RuvB. An RuvB hexamer assembles on each DNA strand where it exits the tetramer. Each RuvB hexamer is contacted by two RuvA subunits (via domain III) on 2 adjacent RuvB subunits; this complex drives branch migration. In the full resolvosome a probable DNA-RuvA(4)-RuvB(12)-RuvC(2) complex forms which resolves the HJ.</text>
</comment>
<comment type="subcellular location">
    <subcellularLocation>
        <location evidence="1">Cytoplasm</location>
    </subcellularLocation>
</comment>
<comment type="domain">
    <text evidence="1">Has 3 domains, the large (RuvB-L) and small ATPase (RuvB-S) domains and the C-terminal head (RuvB-H) domain. The head domain binds DNA, while the ATPase domains jointly bind ATP, ADP or are empty depending on the state of the subunit in the translocation cycle. During a single DNA translocation step the structure of each domain remains the same, but their relative positions change.</text>
</comment>
<comment type="similarity">
    <text evidence="1">Belongs to the RuvB family.</text>
</comment>
<comment type="sequence caution" evidence="2">
    <conflict type="erroneous initiation">
        <sequence resource="EMBL-CDS" id="AAU27658"/>
    </conflict>
    <text>Extended N-terminus.</text>
</comment>